<protein>
    <recommendedName>
        <fullName>Uncharacterized protein YGL034C</fullName>
    </recommendedName>
</protein>
<evidence type="ECO:0000255" key="1"/>
<proteinExistence type="predicted"/>
<keyword id="KW-0067">ATP-binding</keyword>
<keyword id="KW-0547">Nucleotide-binding</keyword>
<keyword id="KW-1185">Reference proteome</keyword>
<feature type="chain" id="PRO_0000202772" description="Uncharacterized protein YGL034C">
    <location>
        <begin position="1"/>
        <end position="121"/>
    </location>
</feature>
<feature type="binding site" evidence="1">
    <location>
        <begin position="77"/>
        <end position="84"/>
    </location>
    <ligand>
        <name>ATP</name>
        <dbReference type="ChEBI" id="CHEBI:30616"/>
    </ligand>
</feature>
<gene>
    <name type="ordered locus">YGL034C</name>
</gene>
<reference key="1">
    <citation type="journal article" date="1997" name="Nature">
        <title>The nucleotide sequence of Saccharomyces cerevisiae chromosome VII.</title>
        <authorList>
            <person name="Tettelin H."/>
            <person name="Agostoni-Carbone M.L."/>
            <person name="Albermann K."/>
            <person name="Albers M."/>
            <person name="Arroyo J."/>
            <person name="Backes U."/>
            <person name="Barreiros T."/>
            <person name="Bertani I."/>
            <person name="Bjourson A.J."/>
            <person name="Brueckner M."/>
            <person name="Bruschi C.V."/>
            <person name="Carignani G."/>
            <person name="Castagnoli L."/>
            <person name="Cerdan E."/>
            <person name="Clemente M.L."/>
            <person name="Coblenz A."/>
            <person name="Coglievina M."/>
            <person name="Coissac E."/>
            <person name="Defoor E."/>
            <person name="Del Bino S."/>
            <person name="Delius H."/>
            <person name="Delneri D."/>
            <person name="de Wergifosse P."/>
            <person name="Dujon B."/>
            <person name="Durand P."/>
            <person name="Entian K.-D."/>
            <person name="Eraso P."/>
            <person name="Escribano V."/>
            <person name="Fabiani L."/>
            <person name="Fartmann B."/>
            <person name="Feroli F."/>
            <person name="Feuermann M."/>
            <person name="Frontali L."/>
            <person name="Garcia-Gonzalez M."/>
            <person name="Garcia-Saez M.I."/>
            <person name="Goffeau A."/>
            <person name="Guerreiro P."/>
            <person name="Hani J."/>
            <person name="Hansen M."/>
            <person name="Hebling U."/>
            <person name="Hernandez K."/>
            <person name="Heumann K."/>
            <person name="Hilger F."/>
            <person name="Hofmann B."/>
            <person name="Indge K.J."/>
            <person name="James C.M."/>
            <person name="Klima R."/>
            <person name="Koetter P."/>
            <person name="Kramer B."/>
            <person name="Kramer W."/>
            <person name="Lauquin G."/>
            <person name="Leuther H."/>
            <person name="Louis E.J."/>
            <person name="Maillier E."/>
            <person name="Marconi A."/>
            <person name="Martegani E."/>
            <person name="Mazon M.J."/>
            <person name="Mazzoni C."/>
            <person name="McReynolds A.D.K."/>
            <person name="Melchioretto P."/>
            <person name="Mewes H.-W."/>
            <person name="Minenkova O."/>
            <person name="Mueller-Auer S."/>
            <person name="Nawrocki A."/>
            <person name="Netter P."/>
            <person name="Neu R."/>
            <person name="Nombela C."/>
            <person name="Oliver S.G."/>
            <person name="Panzeri L."/>
            <person name="Paoluzi S."/>
            <person name="Plevani P."/>
            <person name="Portetelle D."/>
            <person name="Portillo F."/>
            <person name="Potier S."/>
            <person name="Purnelle B."/>
            <person name="Rieger M."/>
            <person name="Riles L."/>
            <person name="Rinaldi T."/>
            <person name="Robben J."/>
            <person name="Rodrigues-Pousada C."/>
            <person name="Rodriguez-Belmonte E."/>
            <person name="Rodriguez-Torres A.M."/>
            <person name="Rose M."/>
            <person name="Ruzzi M."/>
            <person name="Saliola M."/>
            <person name="Sanchez-Perez M."/>
            <person name="Schaefer B."/>
            <person name="Schaefer M."/>
            <person name="Scharfe M."/>
            <person name="Schmidheini T."/>
            <person name="Schreer A."/>
            <person name="Skala J."/>
            <person name="Souciet J.-L."/>
            <person name="Steensma H.Y."/>
            <person name="Talla E."/>
            <person name="Thierry A."/>
            <person name="Vandenbol M."/>
            <person name="van der Aart Q.J.M."/>
            <person name="Van Dyck L."/>
            <person name="Vanoni M."/>
            <person name="Verhasselt P."/>
            <person name="Voet M."/>
            <person name="Volckaert G."/>
            <person name="Wambutt R."/>
            <person name="Watson M.D."/>
            <person name="Weber N."/>
            <person name="Wedler E."/>
            <person name="Wedler H."/>
            <person name="Wipfli P."/>
            <person name="Wolf K."/>
            <person name="Wright L.F."/>
            <person name="Zaccaria P."/>
            <person name="Zimmermann M."/>
            <person name="Zollner A."/>
            <person name="Kleine K."/>
        </authorList>
    </citation>
    <scope>NUCLEOTIDE SEQUENCE [LARGE SCALE GENOMIC DNA]</scope>
    <source>
        <strain>ATCC 204508 / S288c</strain>
    </source>
</reference>
<reference key="2">
    <citation type="journal article" date="2014" name="G3 (Bethesda)">
        <title>The reference genome sequence of Saccharomyces cerevisiae: Then and now.</title>
        <authorList>
            <person name="Engel S.R."/>
            <person name="Dietrich F.S."/>
            <person name="Fisk D.G."/>
            <person name="Binkley G."/>
            <person name="Balakrishnan R."/>
            <person name="Costanzo M.C."/>
            <person name="Dwight S.S."/>
            <person name="Hitz B.C."/>
            <person name="Karra K."/>
            <person name="Nash R.S."/>
            <person name="Weng S."/>
            <person name="Wong E.D."/>
            <person name="Lloyd P."/>
            <person name="Skrzypek M.S."/>
            <person name="Miyasato S.R."/>
            <person name="Simison M."/>
            <person name="Cherry J.M."/>
        </authorList>
    </citation>
    <scope>GENOME REANNOTATION</scope>
    <source>
        <strain>ATCC 204508 / S288c</strain>
    </source>
</reference>
<reference key="3">
    <citation type="journal article" date="2007" name="Genome Res.">
        <title>Approaching a complete repository of sequence-verified protein-encoding clones for Saccharomyces cerevisiae.</title>
        <authorList>
            <person name="Hu Y."/>
            <person name="Rolfs A."/>
            <person name="Bhullar B."/>
            <person name="Murthy T.V.S."/>
            <person name="Zhu C."/>
            <person name="Berger M.F."/>
            <person name="Camargo A.A."/>
            <person name="Kelley F."/>
            <person name="McCarron S."/>
            <person name="Jepson D."/>
            <person name="Richardson A."/>
            <person name="Raphael J."/>
            <person name="Moreira D."/>
            <person name="Taycher E."/>
            <person name="Zuo D."/>
            <person name="Mohr S."/>
            <person name="Kane M.F."/>
            <person name="Williamson J."/>
            <person name="Simpson A.J.G."/>
            <person name="Bulyk M.L."/>
            <person name="Harlow E."/>
            <person name="Marsischky G."/>
            <person name="Kolodner R.D."/>
            <person name="LaBaer J."/>
        </authorList>
    </citation>
    <scope>NUCLEOTIDE SEQUENCE [GENOMIC DNA]</scope>
    <source>
        <strain>ATCC 204508 / S288c</strain>
    </source>
</reference>
<organism>
    <name type="scientific">Saccharomyces cerevisiae (strain ATCC 204508 / S288c)</name>
    <name type="common">Baker's yeast</name>
    <dbReference type="NCBI Taxonomy" id="559292"/>
    <lineage>
        <taxon>Eukaryota</taxon>
        <taxon>Fungi</taxon>
        <taxon>Dikarya</taxon>
        <taxon>Ascomycota</taxon>
        <taxon>Saccharomycotina</taxon>
        <taxon>Saccharomycetes</taxon>
        <taxon>Saccharomycetales</taxon>
        <taxon>Saccharomycetaceae</taxon>
        <taxon>Saccharomyces</taxon>
    </lineage>
</organism>
<name>YGD4_YEAST</name>
<accession>P53186</accession>
<accession>A0A1S0T077</accession>
<dbReference type="EMBL" id="Z72556">
    <property type="protein sequence ID" value="CAA96735.1"/>
    <property type="molecule type" value="Genomic_DNA"/>
</dbReference>
<dbReference type="EMBL" id="AY558482">
    <property type="protein sequence ID" value="AAS56808.1"/>
    <property type="molecule type" value="Genomic_DNA"/>
</dbReference>
<dbReference type="EMBL" id="BK006941">
    <property type="protein sequence ID" value="DAA80298.1"/>
    <property type="molecule type" value="Genomic_DNA"/>
</dbReference>
<dbReference type="PIR" id="S64036">
    <property type="entry name" value="S64036"/>
</dbReference>
<dbReference type="RefSeq" id="NP_001335778.1">
    <property type="nucleotide sequence ID" value="NM_001348837.1"/>
</dbReference>
<dbReference type="SMR" id="P53186"/>
<dbReference type="FunCoup" id="P53186">
    <property type="interactions" value="16"/>
</dbReference>
<dbReference type="STRING" id="4932.YGL034C"/>
<dbReference type="GlyGen" id="P53186">
    <property type="glycosylation" value="2 sites, 1 O-linked glycan (2 sites)"/>
</dbReference>
<dbReference type="PaxDb" id="4932-YGL034C"/>
<dbReference type="EnsemblFungi" id="YGL034C_mRNA">
    <property type="protein sequence ID" value="YGL034C"/>
    <property type="gene ID" value="YGL034C"/>
</dbReference>
<dbReference type="GeneID" id="852849"/>
<dbReference type="AGR" id="SGD:S000003002"/>
<dbReference type="SGD" id="S000003002">
    <property type="gene designation" value="YGL034C"/>
</dbReference>
<dbReference type="HOGENOM" id="CLU_2243096_0_0_1"/>
<dbReference type="InParanoid" id="P53186"/>
<dbReference type="OMA" id="TTNFYNR"/>
<dbReference type="PRO" id="PR:P53186"/>
<dbReference type="Proteomes" id="UP000002311">
    <property type="component" value="Chromosome VII"/>
</dbReference>
<dbReference type="RNAct" id="P53186">
    <property type="molecule type" value="protein"/>
</dbReference>
<dbReference type="GO" id="GO:0005524">
    <property type="term" value="F:ATP binding"/>
    <property type="evidence" value="ECO:0007669"/>
    <property type="project" value="UniProtKB-KW"/>
</dbReference>
<sequence>MNVVAIIMASQETCSGRAPRETPEWRRPACLVASILVRALEFSWLFSTCLLVAFDFARDCGLPPHSGKTWSDGKGPAALSFGKTNTKEATTNFYNRLDEKSGEEQAEKRKENSRSWIIYLL</sequence>